<protein>
    <recommendedName>
        <fullName evidence="1">Methionyl-tRNA formyltransferase</fullName>
        <ecNumber evidence="1">2.1.2.9</ecNumber>
    </recommendedName>
</protein>
<feature type="chain" id="PRO_0000083021" description="Methionyl-tRNA formyltransferase">
    <location>
        <begin position="1"/>
        <end position="317"/>
    </location>
</feature>
<feature type="binding site" evidence="1">
    <location>
        <begin position="112"/>
        <end position="115"/>
    </location>
    <ligand>
        <name>(6S)-5,6,7,8-tetrahydrofolate</name>
        <dbReference type="ChEBI" id="CHEBI:57453"/>
    </ligand>
</feature>
<reference key="1">
    <citation type="journal article" date="2000" name="DNA Res.">
        <title>Complete genome structure of the nitrogen-fixing symbiotic bacterium Mesorhizobium loti.</title>
        <authorList>
            <person name="Kaneko T."/>
            <person name="Nakamura Y."/>
            <person name="Sato S."/>
            <person name="Asamizu E."/>
            <person name="Kato T."/>
            <person name="Sasamoto S."/>
            <person name="Watanabe A."/>
            <person name="Idesawa K."/>
            <person name="Ishikawa A."/>
            <person name="Kawashima K."/>
            <person name="Kimura T."/>
            <person name="Kishida Y."/>
            <person name="Kiyokawa C."/>
            <person name="Kohara M."/>
            <person name="Matsumoto M."/>
            <person name="Matsuno A."/>
            <person name="Mochizuki Y."/>
            <person name="Nakayama S."/>
            <person name="Nakazaki N."/>
            <person name="Shimpo S."/>
            <person name="Sugimoto M."/>
            <person name="Takeuchi C."/>
            <person name="Yamada M."/>
            <person name="Tabata S."/>
        </authorList>
    </citation>
    <scope>NUCLEOTIDE SEQUENCE [LARGE SCALE GENOMIC DNA]</scope>
    <source>
        <strain>LMG 29417 / CECT 9101 / MAFF 303099</strain>
    </source>
</reference>
<evidence type="ECO:0000255" key="1">
    <source>
        <dbReference type="HAMAP-Rule" id="MF_00182"/>
    </source>
</evidence>
<gene>
    <name evidence="1" type="primary">fmt</name>
    <name type="ordered locus">mll4854</name>
</gene>
<proteinExistence type="inferred from homology"/>
<dbReference type="EC" id="2.1.2.9" evidence="1"/>
<dbReference type="EMBL" id="BA000012">
    <property type="protein sequence ID" value="BAB51418.1"/>
    <property type="molecule type" value="Genomic_DNA"/>
</dbReference>
<dbReference type="RefSeq" id="WP_010912759.1">
    <property type="nucleotide sequence ID" value="NC_002678.2"/>
</dbReference>
<dbReference type="SMR" id="Q98D53"/>
<dbReference type="KEGG" id="mlo:mll4854"/>
<dbReference type="PATRIC" id="fig|266835.9.peg.3835"/>
<dbReference type="eggNOG" id="COG0223">
    <property type="taxonomic scope" value="Bacteria"/>
</dbReference>
<dbReference type="HOGENOM" id="CLU_033347_1_2_5"/>
<dbReference type="Proteomes" id="UP000000552">
    <property type="component" value="Chromosome"/>
</dbReference>
<dbReference type="GO" id="GO:0005829">
    <property type="term" value="C:cytosol"/>
    <property type="evidence" value="ECO:0007669"/>
    <property type="project" value="TreeGrafter"/>
</dbReference>
<dbReference type="GO" id="GO:0004479">
    <property type="term" value="F:methionyl-tRNA formyltransferase activity"/>
    <property type="evidence" value="ECO:0007669"/>
    <property type="project" value="UniProtKB-UniRule"/>
</dbReference>
<dbReference type="CDD" id="cd08646">
    <property type="entry name" value="FMT_core_Met-tRNA-FMT_N"/>
    <property type="match status" value="1"/>
</dbReference>
<dbReference type="CDD" id="cd08704">
    <property type="entry name" value="Met_tRNA_FMT_C"/>
    <property type="match status" value="1"/>
</dbReference>
<dbReference type="Gene3D" id="3.40.50.12230">
    <property type="match status" value="1"/>
</dbReference>
<dbReference type="HAMAP" id="MF_00182">
    <property type="entry name" value="Formyl_trans"/>
    <property type="match status" value="1"/>
</dbReference>
<dbReference type="InterPro" id="IPR005794">
    <property type="entry name" value="Fmt"/>
</dbReference>
<dbReference type="InterPro" id="IPR005793">
    <property type="entry name" value="Formyl_trans_C"/>
</dbReference>
<dbReference type="InterPro" id="IPR002376">
    <property type="entry name" value="Formyl_transf_N"/>
</dbReference>
<dbReference type="InterPro" id="IPR036477">
    <property type="entry name" value="Formyl_transf_N_sf"/>
</dbReference>
<dbReference type="InterPro" id="IPR011034">
    <property type="entry name" value="Formyl_transferase-like_C_sf"/>
</dbReference>
<dbReference type="InterPro" id="IPR044135">
    <property type="entry name" value="Met-tRNA-FMT_C"/>
</dbReference>
<dbReference type="InterPro" id="IPR041711">
    <property type="entry name" value="Met-tRNA-FMT_N"/>
</dbReference>
<dbReference type="NCBIfam" id="TIGR00460">
    <property type="entry name" value="fmt"/>
    <property type="match status" value="1"/>
</dbReference>
<dbReference type="PANTHER" id="PTHR11138">
    <property type="entry name" value="METHIONYL-TRNA FORMYLTRANSFERASE"/>
    <property type="match status" value="1"/>
</dbReference>
<dbReference type="PANTHER" id="PTHR11138:SF5">
    <property type="entry name" value="METHIONYL-TRNA FORMYLTRANSFERASE, MITOCHONDRIAL"/>
    <property type="match status" value="1"/>
</dbReference>
<dbReference type="Pfam" id="PF02911">
    <property type="entry name" value="Formyl_trans_C"/>
    <property type="match status" value="1"/>
</dbReference>
<dbReference type="Pfam" id="PF00551">
    <property type="entry name" value="Formyl_trans_N"/>
    <property type="match status" value="1"/>
</dbReference>
<dbReference type="SUPFAM" id="SSF50486">
    <property type="entry name" value="FMT C-terminal domain-like"/>
    <property type="match status" value="1"/>
</dbReference>
<dbReference type="SUPFAM" id="SSF53328">
    <property type="entry name" value="Formyltransferase"/>
    <property type="match status" value="1"/>
</dbReference>
<organism>
    <name type="scientific">Mesorhizobium japonicum (strain LMG 29417 / CECT 9101 / MAFF 303099)</name>
    <name type="common">Mesorhizobium loti (strain MAFF 303099)</name>
    <dbReference type="NCBI Taxonomy" id="266835"/>
    <lineage>
        <taxon>Bacteria</taxon>
        <taxon>Pseudomonadati</taxon>
        <taxon>Pseudomonadota</taxon>
        <taxon>Alphaproteobacteria</taxon>
        <taxon>Hyphomicrobiales</taxon>
        <taxon>Phyllobacteriaceae</taxon>
        <taxon>Mesorhizobium</taxon>
    </lineage>
</organism>
<accession>Q98D53</accession>
<name>FMT_RHILO</name>
<keyword id="KW-0648">Protein biosynthesis</keyword>
<keyword id="KW-0808">Transferase</keyword>
<comment type="function">
    <text evidence="1">Attaches a formyl group to the free amino group of methionyl-tRNA(fMet). The formyl group appears to play a dual role in the initiator identity of N-formylmethionyl-tRNA by promoting its recognition by IF2 and preventing the misappropriation of this tRNA by the elongation apparatus.</text>
</comment>
<comment type="catalytic activity">
    <reaction evidence="1">
        <text>L-methionyl-tRNA(fMet) + (6R)-10-formyltetrahydrofolate = N-formyl-L-methionyl-tRNA(fMet) + (6S)-5,6,7,8-tetrahydrofolate + H(+)</text>
        <dbReference type="Rhea" id="RHEA:24380"/>
        <dbReference type="Rhea" id="RHEA-COMP:9952"/>
        <dbReference type="Rhea" id="RHEA-COMP:9953"/>
        <dbReference type="ChEBI" id="CHEBI:15378"/>
        <dbReference type="ChEBI" id="CHEBI:57453"/>
        <dbReference type="ChEBI" id="CHEBI:78530"/>
        <dbReference type="ChEBI" id="CHEBI:78844"/>
        <dbReference type="ChEBI" id="CHEBI:195366"/>
        <dbReference type="EC" id="2.1.2.9"/>
    </reaction>
</comment>
<comment type="similarity">
    <text evidence="1">Belongs to the Fmt family.</text>
</comment>
<sequence>MPLRVIFMGTPEFSVPTLRAIAKAGHEISAVYTQPPRAAGRRGLELTPSPVQREAERLGIEVRTPTSLKGEAEQAAFNALRADIAVVVAYGLLLPKVILDAPRLGCINGHASLLPRWRGAAPIQRAIMAGDLESGMMVMRMEEGLDTGPVGLLEKCAIDPDMTAGDLHDRLMRVGAALMVEALARLAKNTLTFTAQAAEGVTYARKIDKSETRVDWTRPAAEVHNHLRGLSPFPGAWSEIDIGGRMERLKLLRSTLSDGLSPSEDLGESGGILDDRLTVACGAGAIRLVEVQRAGGKPAAASEFLRGAKIVKGMKFS</sequence>